<gene>
    <name evidence="1" type="primary">gltX2</name>
    <name type="synonym">gltX-2</name>
    <name type="ordered locus">ECH_0605</name>
</gene>
<feature type="chain" id="PRO_0000237363" description="Glutamate--tRNA ligase 2">
    <location>
        <begin position="1"/>
        <end position="469"/>
    </location>
</feature>
<feature type="short sequence motif" description="'HIGH' region" evidence="1">
    <location>
        <begin position="11"/>
        <end position="21"/>
    </location>
</feature>
<feature type="short sequence motif" description="'KMSKS' region" evidence="1">
    <location>
        <begin position="238"/>
        <end position="242"/>
    </location>
</feature>
<feature type="binding site" evidence="1">
    <location>
        <position position="241"/>
    </location>
    <ligand>
        <name>ATP</name>
        <dbReference type="ChEBI" id="CHEBI:30616"/>
    </ligand>
</feature>
<comment type="function">
    <text evidence="1">Catalyzes the attachment of glutamate to tRNA(Glu) in a two-step reaction: glutamate is first activated by ATP to form Glu-AMP and then transferred to the acceptor end of tRNA(Glu).</text>
</comment>
<comment type="catalytic activity">
    <reaction evidence="1">
        <text>tRNA(Glu) + L-glutamate + ATP = L-glutamyl-tRNA(Glu) + AMP + diphosphate</text>
        <dbReference type="Rhea" id="RHEA:23540"/>
        <dbReference type="Rhea" id="RHEA-COMP:9663"/>
        <dbReference type="Rhea" id="RHEA-COMP:9680"/>
        <dbReference type="ChEBI" id="CHEBI:29985"/>
        <dbReference type="ChEBI" id="CHEBI:30616"/>
        <dbReference type="ChEBI" id="CHEBI:33019"/>
        <dbReference type="ChEBI" id="CHEBI:78442"/>
        <dbReference type="ChEBI" id="CHEBI:78520"/>
        <dbReference type="ChEBI" id="CHEBI:456215"/>
        <dbReference type="EC" id="6.1.1.17"/>
    </reaction>
</comment>
<comment type="subunit">
    <text evidence="1">Monomer.</text>
</comment>
<comment type="subcellular location">
    <subcellularLocation>
        <location evidence="1">Cytoplasm</location>
    </subcellularLocation>
</comment>
<comment type="similarity">
    <text evidence="1">Belongs to the class-I aminoacyl-tRNA synthetase family. Glutamate--tRNA ligase type 1 subfamily.</text>
</comment>
<reference key="1">
    <citation type="journal article" date="2006" name="PLoS Genet.">
        <title>Comparative genomics of emerging human ehrlichiosis agents.</title>
        <authorList>
            <person name="Dunning Hotopp J.C."/>
            <person name="Lin M."/>
            <person name="Madupu R."/>
            <person name="Crabtree J."/>
            <person name="Angiuoli S.V."/>
            <person name="Eisen J.A."/>
            <person name="Seshadri R."/>
            <person name="Ren Q."/>
            <person name="Wu M."/>
            <person name="Utterback T.R."/>
            <person name="Smith S."/>
            <person name="Lewis M."/>
            <person name="Khouri H."/>
            <person name="Zhang C."/>
            <person name="Niu H."/>
            <person name="Lin Q."/>
            <person name="Ohashi N."/>
            <person name="Zhi N."/>
            <person name="Nelson W.C."/>
            <person name="Brinkac L.M."/>
            <person name="Dodson R.J."/>
            <person name="Rosovitz M.J."/>
            <person name="Sundaram J.P."/>
            <person name="Daugherty S.C."/>
            <person name="Davidsen T."/>
            <person name="Durkin A.S."/>
            <person name="Gwinn M.L."/>
            <person name="Haft D.H."/>
            <person name="Selengut J.D."/>
            <person name="Sullivan S.A."/>
            <person name="Zafar N."/>
            <person name="Zhou L."/>
            <person name="Benahmed F."/>
            <person name="Forberger H."/>
            <person name="Halpin R."/>
            <person name="Mulligan S."/>
            <person name="Robinson J."/>
            <person name="White O."/>
            <person name="Rikihisa Y."/>
            <person name="Tettelin H."/>
        </authorList>
    </citation>
    <scope>NUCLEOTIDE SEQUENCE [LARGE SCALE GENOMIC DNA]</scope>
    <source>
        <strain>ATCC CRL-10679 / Arkansas</strain>
    </source>
</reference>
<accession>Q2GGL8</accession>
<evidence type="ECO:0000255" key="1">
    <source>
        <dbReference type="HAMAP-Rule" id="MF_00022"/>
    </source>
</evidence>
<keyword id="KW-0030">Aminoacyl-tRNA synthetase</keyword>
<keyword id="KW-0067">ATP-binding</keyword>
<keyword id="KW-0963">Cytoplasm</keyword>
<keyword id="KW-0436">Ligase</keyword>
<keyword id="KW-0547">Nucleotide-binding</keyword>
<keyword id="KW-0648">Protein biosynthesis</keyword>
<keyword id="KW-1185">Reference proteome</keyword>
<organism>
    <name type="scientific">Ehrlichia chaffeensis (strain ATCC CRL-10679 / Arkansas)</name>
    <dbReference type="NCBI Taxonomy" id="205920"/>
    <lineage>
        <taxon>Bacteria</taxon>
        <taxon>Pseudomonadati</taxon>
        <taxon>Pseudomonadota</taxon>
        <taxon>Alphaproteobacteria</taxon>
        <taxon>Rickettsiales</taxon>
        <taxon>Anaplasmataceae</taxon>
        <taxon>Ehrlichia</taxon>
    </lineage>
</organism>
<dbReference type="EC" id="6.1.1.17" evidence="1"/>
<dbReference type="EMBL" id="CP000236">
    <property type="protein sequence ID" value="ABD45013.1"/>
    <property type="molecule type" value="Genomic_DNA"/>
</dbReference>
<dbReference type="RefSeq" id="WP_006011666.1">
    <property type="nucleotide sequence ID" value="NC_007799.1"/>
</dbReference>
<dbReference type="SMR" id="Q2GGL8"/>
<dbReference type="STRING" id="205920.ECH_0605"/>
<dbReference type="KEGG" id="ech:ECH_0605"/>
<dbReference type="eggNOG" id="COG0008">
    <property type="taxonomic scope" value="Bacteria"/>
</dbReference>
<dbReference type="HOGENOM" id="CLU_015768_6_0_5"/>
<dbReference type="OrthoDB" id="9807503at2"/>
<dbReference type="Proteomes" id="UP000008320">
    <property type="component" value="Chromosome"/>
</dbReference>
<dbReference type="GO" id="GO:0005829">
    <property type="term" value="C:cytosol"/>
    <property type="evidence" value="ECO:0007669"/>
    <property type="project" value="TreeGrafter"/>
</dbReference>
<dbReference type="GO" id="GO:0005524">
    <property type="term" value="F:ATP binding"/>
    <property type="evidence" value="ECO:0007669"/>
    <property type="project" value="UniProtKB-UniRule"/>
</dbReference>
<dbReference type="GO" id="GO:0004818">
    <property type="term" value="F:glutamate-tRNA ligase activity"/>
    <property type="evidence" value="ECO:0007669"/>
    <property type="project" value="UniProtKB-UniRule"/>
</dbReference>
<dbReference type="GO" id="GO:0000049">
    <property type="term" value="F:tRNA binding"/>
    <property type="evidence" value="ECO:0007669"/>
    <property type="project" value="InterPro"/>
</dbReference>
<dbReference type="GO" id="GO:0008270">
    <property type="term" value="F:zinc ion binding"/>
    <property type="evidence" value="ECO:0007669"/>
    <property type="project" value="InterPro"/>
</dbReference>
<dbReference type="GO" id="GO:0006424">
    <property type="term" value="P:glutamyl-tRNA aminoacylation"/>
    <property type="evidence" value="ECO:0007669"/>
    <property type="project" value="UniProtKB-UniRule"/>
</dbReference>
<dbReference type="CDD" id="cd00808">
    <property type="entry name" value="GluRS_core"/>
    <property type="match status" value="1"/>
</dbReference>
<dbReference type="FunFam" id="3.40.50.620:FF:000007">
    <property type="entry name" value="Glutamate--tRNA ligase"/>
    <property type="match status" value="1"/>
</dbReference>
<dbReference type="Gene3D" id="1.10.10.350">
    <property type="match status" value="1"/>
</dbReference>
<dbReference type="Gene3D" id="3.40.50.620">
    <property type="entry name" value="HUPs"/>
    <property type="match status" value="1"/>
</dbReference>
<dbReference type="HAMAP" id="MF_00022">
    <property type="entry name" value="Glu_tRNA_synth_type1"/>
    <property type="match status" value="1"/>
</dbReference>
<dbReference type="InterPro" id="IPR045462">
    <property type="entry name" value="aa-tRNA-synth_I_cd-bd"/>
</dbReference>
<dbReference type="InterPro" id="IPR020751">
    <property type="entry name" value="aa-tRNA-synth_I_codon-bd_sub2"/>
</dbReference>
<dbReference type="InterPro" id="IPR001412">
    <property type="entry name" value="aa-tRNA-synth_I_CS"/>
</dbReference>
<dbReference type="InterPro" id="IPR008925">
    <property type="entry name" value="aa_tRNA-synth_I_cd-bd_sf"/>
</dbReference>
<dbReference type="InterPro" id="IPR004527">
    <property type="entry name" value="Glu-tRNA-ligase_bac/mito"/>
</dbReference>
<dbReference type="InterPro" id="IPR000924">
    <property type="entry name" value="Glu/Gln-tRNA-synth"/>
</dbReference>
<dbReference type="InterPro" id="IPR020058">
    <property type="entry name" value="Glu/Gln-tRNA-synth_Ib_cat-dom"/>
</dbReference>
<dbReference type="InterPro" id="IPR049940">
    <property type="entry name" value="GluQ/Sye"/>
</dbReference>
<dbReference type="InterPro" id="IPR033910">
    <property type="entry name" value="GluRS_core"/>
</dbReference>
<dbReference type="InterPro" id="IPR014729">
    <property type="entry name" value="Rossmann-like_a/b/a_fold"/>
</dbReference>
<dbReference type="NCBIfam" id="TIGR00464">
    <property type="entry name" value="gltX_bact"/>
    <property type="match status" value="1"/>
</dbReference>
<dbReference type="PANTHER" id="PTHR43311">
    <property type="entry name" value="GLUTAMATE--TRNA LIGASE"/>
    <property type="match status" value="1"/>
</dbReference>
<dbReference type="PANTHER" id="PTHR43311:SF2">
    <property type="entry name" value="GLUTAMATE--TRNA LIGASE, MITOCHONDRIAL-RELATED"/>
    <property type="match status" value="1"/>
</dbReference>
<dbReference type="Pfam" id="PF19269">
    <property type="entry name" value="Anticodon_2"/>
    <property type="match status" value="1"/>
</dbReference>
<dbReference type="Pfam" id="PF00749">
    <property type="entry name" value="tRNA-synt_1c"/>
    <property type="match status" value="1"/>
</dbReference>
<dbReference type="PRINTS" id="PR00987">
    <property type="entry name" value="TRNASYNTHGLU"/>
</dbReference>
<dbReference type="SUPFAM" id="SSF48163">
    <property type="entry name" value="An anticodon-binding domain of class I aminoacyl-tRNA synthetases"/>
    <property type="match status" value="1"/>
</dbReference>
<dbReference type="SUPFAM" id="SSF52374">
    <property type="entry name" value="Nucleotidylyl transferase"/>
    <property type="match status" value="1"/>
</dbReference>
<dbReference type="PROSITE" id="PS00178">
    <property type="entry name" value="AA_TRNA_LIGASE_I"/>
    <property type="match status" value="1"/>
</dbReference>
<proteinExistence type="inferred from homology"/>
<name>SYE2_EHRCR</name>
<protein>
    <recommendedName>
        <fullName evidence="1">Glutamate--tRNA ligase 2</fullName>
        <ecNumber evidence="1">6.1.1.17</ecNumber>
    </recommendedName>
    <alternativeName>
        <fullName evidence="1">Glutamyl-tRNA synthetase 2</fullName>
        <shortName evidence="1">GluRS 2</shortName>
    </alternativeName>
</protein>
<sequence length="469" mass="54319">MSHNVITRFAPSPTGHLHLGGARTALFNWLYAKHNNGKFLLRIEDTDKKRSSKELIDSIINAMSWLKIPYDGEIVLQSKNISRHIEIANQLILNNKAYYCYCSEEEINKEKEEFSKKGLYYKHNCIWKNKNFTIDNLTRVIRLRSPTEGVTSFDDKVYGNITVSNTQLDDMVLLRSDNTPTYLLSVVVDDHDMNITHIIRGTDHLTNTARQLLIYNALEWNPPKFAHIPLIHDEDGNKLSKRHQAIGIHEYKNLGILPEAISNYLLRMGWSHEDDEIISMDQAIKWFSIKNIGQSPARLDNKKLEFLNNHYISLTEDEVILNMIIPIIEKKIGYMLNEVKKGYLLKGLYELKKRTKNLVNLANESLFYVEDVPISIDQEASAIIKDYKHVFSILYNNLSRISEKEWNNSILTSTIKNISQNLDIKISNIYHCLRASIVGRMNAPSIIEIMINLQQEECLKRIKYAQNIE</sequence>